<gene>
    <name evidence="2" type="primary">tuf2</name>
    <name type="synonym">tufA</name>
    <name type="ordered locus">plu4730</name>
</gene>
<proteinExistence type="inferred from homology"/>
<keyword id="KW-0963">Cytoplasm</keyword>
<keyword id="KW-0251">Elongation factor</keyword>
<keyword id="KW-0342">GTP-binding</keyword>
<keyword id="KW-0378">Hydrolase</keyword>
<keyword id="KW-0460">Magnesium</keyword>
<keyword id="KW-0479">Metal-binding</keyword>
<keyword id="KW-0547">Nucleotide-binding</keyword>
<keyword id="KW-0648">Protein biosynthesis</keyword>
<keyword id="KW-1185">Reference proteome</keyword>
<comment type="function">
    <text evidence="2">GTP hydrolase that promotes the GTP-dependent binding of aminoacyl-tRNA to the A-site of ribosomes during protein biosynthesis.</text>
</comment>
<comment type="catalytic activity">
    <reaction evidence="2">
        <text>GTP + H2O = GDP + phosphate + H(+)</text>
        <dbReference type="Rhea" id="RHEA:19669"/>
        <dbReference type="ChEBI" id="CHEBI:15377"/>
        <dbReference type="ChEBI" id="CHEBI:15378"/>
        <dbReference type="ChEBI" id="CHEBI:37565"/>
        <dbReference type="ChEBI" id="CHEBI:43474"/>
        <dbReference type="ChEBI" id="CHEBI:58189"/>
        <dbReference type="EC" id="3.6.5.3"/>
    </reaction>
    <physiologicalReaction direction="left-to-right" evidence="2">
        <dbReference type="Rhea" id="RHEA:19670"/>
    </physiologicalReaction>
</comment>
<comment type="subunit">
    <text evidence="2">Monomer.</text>
</comment>
<comment type="subcellular location">
    <subcellularLocation>
        <location evidence="2">Cytoplasm</location>
    </subcellularLocation>
</comment>
<comment type="similarity">
    <text evidence="2">Belongs to the TRAFAC class translation factor GTPase superfamily. Classic translation factor GTPase family. EF-Tu/EF-1A subfamily.</text>
</comment>
<feature type="chain" id="PRO_0000337463" description="Elongation factor Tu 2">
    <location>
        <begin position="1"/>
        <end position="394"/>
    </location>
</feature>
<feature type="domain" description="tr-type G">
    <location>
        <begin position="10"/>
        <end position="204"/>
    </location>
</feature>
<feature type="region of interest" description="G1" evidence="1">
    <location>
        <begin position="19"/>
        <end position="26"/>
    </location>
</feature>
<feature type="region of interest" description="G2" evidence="1">
    <location>
        <begin position="60"/>
        <end position="64"/>
    </location>
</feature>
<feature type="region of interest" description="G3" evidence="1">
    <location>
        <begin position="81"/>
        <end position="84"/>
    </location>
</feature>
<feature type="region of interest" description="G4" evidence="1">
    <location>
        <begin position="136"/>
        <end position="139"/>
    </location>
</feature>
<feature type="region of interest" description="G5" evidence="1">
    <location>
        <begin position="174"/>
        <end position="176"/>
    </location>
</feature>
<feature type="binding site" evidence="2">
    <location>
        <begin position="19"/>
        <end position="26"/>
    </location>
    <ligand>
        <name>GTP</name>
        <dbReference type="ChEBI" id="CHEBI:37565"/>
    </ligand>
</feature>
<feature type="binding site" evidence="2">
    <location>
        <position position="26"/>
    </location>
    <ligand>
        <name>Mg(2+)</name>
        <dbReference type="ChEBI" id="CHEBI:18420"/>
    </ligand>
</feature>
<feature type="binding site" evidence="2">
    <location>
        <begin position="81"/>
        <end position="85"/>
    </location>
    <ligand>
        <name>GTP</name>
        <dbReference type="ChEBI" id="CHEBI:37565"/>
    </ligand>
</feature>
<feature type="binding site" evidence="2">
    <location>
        <begin position="136"/>
        <end position="139"/>
    </location>
    <ligand>
        <name>GTP</name>
        <dbReference type="ChEBI" id="CHEBI:37565"/>
    </ligand>
</feature>
<sequence length="394" mass="43163">MSKEKFERTKPHVNVGTIGHVDHGKTTLTAAITTVLAKTYGGNARAFDQIDNAPEEKARGITISTSHVEYDTPSRHYAHVDCPGHADYVKNMITGAAQMDGAILVVAATDGPMPQTREHILLGRQVGVPYIIVFLNKCDMVDDEELLELVEMEVRELLSQYDFPGDDTPVIRGSALKALEGDAEWEAKIIELAEALDSYIPEPERAIDQPFLLPIEDVFSISGRGTVVTGRVERGIVKVGEEVEIVGIKDTTKTTCTGVEMFRKLLDEGRAGENVGVLLRGTKRDEIERGQVLAKPGSIKPHTTFESEVYILSKDEGGRHTPFFKGYRPQFYFRTTDVTGTIELPEGVEMVMPGDNIQMKVTLIAPIAMDQGLRFAIREGGRTVGAGVVAKVIA</sequence>
<evidence type="ECO:0000250" key="1"/>
<evidence type="ECO:0000255" key="2">
    <source>
        <dbReference type="HAMAP-Rule" id="MF_00118"/>
    </source>
</evidence>
<accession>Q7MYE8</accession>
<protein>
    <recommendedName>
        <fullName evidence="2">Elongation factor Tu 2</fullName>
        <shortName evidence="2">EF-Tu 2</shortName>
        <ecNumber evidence="2">3.6.5.3</ecNumber>
    </recommendedName>
</protein>
<dbReference type="EC" id="3.6.5.3" evidence="2"/>
<dbReference type="EMBL" id="BX571874">
    <property type="protein sequence ID" value="CAE17102.1"/>
    <property type="molecule type" value="Genomic_DNA"/>
</dbReference>
<dbReference type="RefSeq" id="WP_011148798.1">
    <property type="nucleotide sequence ID" value="NC_005126.1"/>
</dbReference>
<dbReference type="SMR" id="Q7MYE8"/>
<dbReference type="STRING" id="243265.plu4730"/>
<dbReference type="GeneID" id="48850955"/>
<dbReference type="KEGG" id="plu:plu4730"/>
<dbReference type="eggNOG" id="COG0050">
    <property type="taxonomic scope" value="Bacteria"/>
</dbReference>
<dbReference type="HOGENOM" id="CLU_007265_0_2_6"/>
<dbReference type="OrthoDB" id="9803139at2"/>
<dbReference type="Proteomes" id="UP000002514">
    <property type="component" value="Chromosome"/>
</dbReference>
<dbReference type="GO" id="GO:0005829">
    <property type="term" value="C:cytosol"/>
    <property type="evidence" value="ECO:0007669"/>
    <property type="project" value="TreeGrafter"/>
</dbReference>
<dbReference type="GO" id="GO:0005525">
    <property type="term" value="F:GTP binding"/>
    <property type="evidence" value="ECO:0007669"/>
    <property type="project" value="UniProtKB-UniRule"/>
</dbReference>
<dbReference type="GO" id="GO:0003924">
    <property type="term" value="F:GTPase activity"/>
    <property type="evidence" value="ECO:0007669"/>
    <property type="project" value="InterPro"/>
</dbReference>
<dbReference type="GO" id="GO:0097216">
    <property type="term" value="F:guanosine tetraphosphate binding"/>
    <property type="evidence" value="ECO:0007669"/>
    <property type="project" value="UniProtKB-ARBA"/>
</dbReference>
<dbReference type="GO" id="GO:0003746">
    <property type="term" value="F:translation elongation factor activity"/>
    <property type="evidence" value="ECO:0007669"/>
    <property type="project" value="UniProtKB-UniRule"/>
</dbReference>
<dbReference type="CDD" id="cd01884">
    <property type="entry name" value="EF_Tu"/>
    <property type="match status" value="1"/>
</dbReference>
<dbReference type="CDD" id="cd03697">
    <property type="entry name" value="EFTU_II"/>
    <property type="match status" value="1"/>
</dbReference>
<dbReference type="CDD" id="cd03707">
    <property type="entry name" value="EFTU_III"/>
    <property type="match status" value="1"/>
</dbReference>
<dbReference type="FunFam" id="2.40.30.10:FF:000001">
    <property type="entry name" value="Elongation factor Tu"/>
    <property type="match status" value="1"/>
</dbReference>
<dbReference type="FunFam" id="3.40.50.300:FF:000003">
    <property type="entry name" value="Elongation factor Tu"/>
    <property type="match status" value="1"/>
</dbReference>
<dbReference type="Gene3D" id="3.40.50.300">
    <property type="entry name" value="P-loop containing nucleotide triphosphate hydrolases"/>
    <property type="match status" value="1"/>
</dbReference>
<dbReference type="Gene3D" id="2.40.30.10">
    <property type="entry name" value="Translation factors"/>
    <property type="match status" value="2"/>
</dbReference>
<dbReference type="HAMAP" id="MF_00118_B">
    <property type="entry name" value="EF_Tu_B"/>
    <property type="match status" value="1"/>
</dbReference>
<dbReference type="InterPro" id="IPR041709">
    <property type="entry name" value="EF-Tu_GTP-bd"/>
</dbReference>
<dbReference type="InterPro" id="IPR050055">
    <property type="entry name" value="EF-Tu_GTPase"/>
</dbReference>
<dbReference type="InterPro" id="IPR004161">
    <property type="entry name" value="EFTu-like_2"/>
</dbReference>
<dbReference type="InterPro" id="IPR033720">
    <property type="entry name" value="EFTU_2"/>
</dbReference>
<dbReference type="InterPro" id="IPR031157">
    <property type="entry name" value="G_TR_CS"/>
</dbReference>
<dbReference type="InterPro" id="IPR027417">
    <property type="entry name" value="P-loop_NTPase"/>
</dbReference>
<dbReference type="InterPro" id="IPR005225">
    <property type="entry name" value="Small_GTP-bd"/>
</dbReference>
<dbReference type="InterPro" id="IPR000795">
    <property type="entry name" value="T_Tr_GTP-bd_dom"/>
</dbReference>
<dbReference type="InterPro" id="IPR009000">
    <property type="entry name" value="Transl_B-barrel_sf"/>
</dbReference>
<dbReference type="InterPro" id="IPR009001">
    <property type="entry name" value="Transl_elong_EF1A/Init_IF2_C"/>
</dbReference>
<dbReference type="InterPro" id="IPR004541">
    <property type="entry name" value="Transl_elong_EFTu/EF1A_bac/org"/>
</dbReference>
<dbReference type="InterPro" id="IPR004160">
    <property type="entry name" value="Transl_elong_EFTu/EF1A_C"/>
</dbReference>
<dbReference type="NCBIfam" id="TIGR00485">
    <property type="entry name" value="EF-Tu"/>
    <property type="match status" value="1"/>
</dbReference>
<dbReference type="NCBIfam" id="NF000766">
    <property type="entry name" value="PRK00049.1"/>
    <property type="match status" value="1"/>
</dbReference>
<dbReference type="NCBIfam" id="NF009372">
    <property type="entry name" value="PRK12735.1"/>
    <property type="match status" value="1"/>
</dbReference>
<dbReference type="NCBIfam" id="NF009373">
    <property type="entry name" value="PRK12736.1"/>
    <property type="match status" value="1"/>
</dbReference>
<dbReference type="NCBIfam" id="TIGR00231">
    <property type="entry name" value="small_GTP"/>
    <property type="match status" value="1"/>
</dbReference>
<dbReference type="PANTHER" id="PTHR43721:SF22">
    <property type="entry name" value="ELONGATION FACTOR TU, MITOCHONDRIAL"/>
    <property type="match status" value="1"/>
</dbReference>
<dbReference type="PANTHER" id="PTHR43721">
    <property type="entry name" value="ELONGATION FACTOR TU-RELATED"/>
    <property type="match status" value="1"/>
</dbReference>
<dbReference type="Pfam" id="PF00009">
    <property type="entry name" value="GTP_EFTU"/>
    <property type="match status" value="1"/>
</dbReference>
<dbReference type="Pfam" id="PF03144">
    <property type="entry name" value="GTP_EFTU_D2"/>
    <property type="match status" value="1"/>
</dbReference>
<dbReference type="Pfam" id="PF03143">
    <property type="entry name" value="GTP_EFTU_D3"/>
    <property type="match status" value="1"/>
</dbReference>
<dbReference type="PRINTS" id="PR00315">
    <property type="entry name" value="ELONGATNFCT"/>
</dbReference>
<dbReference type="SUPFAM" id="SSF50465">
    <property type="entry name" value="EF-Tu/eEF-1alpha/eIF2-gamma C-terminal domain"/>
    <property type="match status" value="1"/>
</dbReference>
<dbReference type="SUPFAM" id="SSF52540">
    <property type="entry name" value="P-loop containing nucleoside triphosphate hydrolases"/>
    <property type="match status" value="1"/>
</dbReference>
<dbReference type="SUPFAM" id="SSF50447">
    <property type="entry name" value="Translation proteins"/>
    <property type="match status" value="1"/>
</dbReference>
<dbReference type="PROSITE" id="PS00301">
    <property type="entry name" value="G_TR_1"/>
    <property type="match status" value="1"/>
</dbReference>
<dbReference type="PROSITE" id="PS51722">
    <property type="entry name" value="G_TR_2"/>
    <property type="match status" value="1"/>
</dbReference>
<organism>
    <name type="scientific">Photorhabdus laumondii subsp. laumondii (strain DSM 15139 / CIP 105565 / TT01)</name>
    <name type="common">Photorhabdus luminescens subsp. laumondii</name>
    <dbReference type="NCBI Taxonomy" id="243265"/>
    <lineage>
        <taxon>Bacteria</taxon>
        <taxon>Pseudomonadati</taxon>
        <taxon>Pseudomonadota</taxon>
        <taxon>Gammaproteobacteria</taxon>
        <taxon>Enterobacterales</taxon>
        <taxon>Morganellaceae</taxon>
        <taxon>Photorhabdus</taxon>
    </lineage>
</organism>
<reference key="1">
    <citation type="journal article" date="2003" name="Nat. Biotechnol.">
        <title>The genome sequence of the entomopathogenic bacterium Photorhabdus luminescens.</title>
        <authorList>
            <person name="Duchaud E."/>
            <person name="Rusniok C."/>
            <person name="Frangeul L."/>
            <person name="Buchrieser C."/>
            <person name="Givaudan A."/>
            <person name="Taourit S."/>
            <person name="Bocs S."/>
            <person name="Boursaux-Eude C."/>
            <person name="Chandler M."/>
            <person name="Charles J.-F."/>
            <person name="Dassa E."/>
            <person name="Derose R."/>
            <person name="Derzelle S."/>
            <person name="Freyssinet G."/>
            <person name="Gaudriault S."/>
            <person name="Medigue C."/>
            <person name="Lanois A."/>
            <person name="Powell K."/>
            <person name="Siguier P."/>
            <person name="Vincent R."/>
            <person name="Wingate V."/>
            <person name="Zouine M."/>
            <person name="Glaser P."/>
            <person name="Boemare N."/>
            <person name="Danchin A."/>
            <person name="Kunst F."/>
        </authorList>
    </citation>
    <scope>NUCLEOTIDE SEQUENCE [LARGE SCALE GENOMIC DNA]</scope>
    <source>
        <strain>DSM 15139 / CIP 105565 / TT01</strain>
    </source>
</reference>
<name>EFTU2_PHOLL</name>